<accession>Q30QN8</accession>
<sequence>MYAIIKNGGKQYKVQEGDILLFDRMTLEPKATFEIKEVLAVNAGELKMGAPFLEGAVVTAEVINEGRDKKVITFKKRRRKDSKVKRGFRRDYTRVRITKIAA</sequence>
<dbReference type="EMBL" id="CP000153">
    <property type="protein sequence ID" value="ABB44693.1"/>
    <property type="molecule type" value="Genomic_DNA"/>
</dbReference>
<dbReference type="RefSeq" id="WP_011373045.1">
    <property type="nucleotide sequence ID" value="NC_007575.1"/>
</dbReference>
<dbReference type="SMR" id="Q30QN8"/>
<dbReference type="STRING" id="326298.Suden_1416"/>
<dbReference type="KEGG" id="tdn:Suden_1416"/>
<dbReference type="eggNOG" id="COG0261">
    <property type="taxonomic scope" value="Bacteria"/>
</dbReference>
<dbReference type="HOGENOM" id="CLU_061463_3_1_7"/>
<dbReference type="OrthoDB" id="9813334at2"/>
<dbReference type="Proteomes" id="UP000002714">
    <property type="component" value="Chromosome"/>
</dbReference>
<dbReference type="GO" id="GO:0005737">
    <property type="term" value="C:cytoplasm"/>
    <property type="evidence" value="ECO:0007669"/>
    <property type="project" value="UniProtKB-ARBA"/>
</dbReference>
<dbReference type="GO" id="GO:1990904">
    <property type="term" value="C:ribonucleoprotein complex"/>
    <property type="evidence" value="ECO:0007669"/>
    <property type="project" value="UniProtKB-KW"/>
</dbReference>
<dbReference type="GO" id="GO:0005840">
    <property type="term" value="C:ribosome"/>
    <property type="evidence" value="ECO:0007669"/>
    <property type="project" value="UniProtKB-KW"/>
</dbReference>
<dbReference type="GO" id="GO:0019843">
    <property type="term" value="F:rRNA binding"/>
    <property type="evidence" value="ECO:0007669"/>
    <property type="project" value="UniProtKB-UniRule"/>
</dbReference>
<dbReference type="GO" id="GO:0003735">
    <property type="term" value="F:structural constituent of ribosome"/>
    <property type="evidence" value="ECO:0007669"/>
    <property type="project" value="InterPro"/>
</dbReference>
<dbReference type="GO" id="GO:0006412">
    <property type="term" value="P:translation"/>
    <property type="evidence" value="ECO:0007669"/>
    <property type="project" value="UniProtKB-UniRule"/>
</dbReference>
<dbReference type="HAMAP" id="MF_01363">
    <property type="entry name" value="Ribosomal_bL21"/>
    <property type="match status" value="1"/>
</dbReference>
<dbReference type="InterPro" id="IPR028909">
    <property type="entry name" value="bL21-like"/>
</dbReference>
<dbReference type="InterPro" id="IPR036164">
    <property type="entry name" value="bL21-like_sf"/>
</dbReference>
<dbReference type="InterPro" id="IPR001787">
    <property type="entry name" value="Ribosomal_bL21"/>
</dbReference>
<dbReference type="InterPro" id="IPR018258">
    <property type="entry name" value="Ribosomal_bL21_CS"/>
</dbReference>
<dbReference type="NCBIfam" id="TIGR00061">
    <property type="entry name" value="L21"/>
    <property type="match status" value="1"/>
</dbReference>
<dbReference type="PANTHER" id="PTHR21349">
    <property type="entry name" value="50S RIBOSOMAL PROTEIN L21"/>
    <property type="match status" value="1"/>
</dbReference>
<dbReference type="PANTHER" id="PTHR21349:SF0">
    <property type="entry name" value="LARGE RIBOSOMAL SUBUNIT PROTEIN BL21M"/>
    <property type="match status" value="1"/>
</dbReference>
<dbReference type="Pfam" id="PF00829">
    <property type="entry name" value="Ribosomal_L21p"/>
    <property type="match status" value="1"/>
</dbReference>
<dbReference type="SUPFAM" id="SSF141091">
    <property type="entry name" value="L21p-like"/>
    <property type="match status" value="1"/>
</dbReference>
<dbReference type="PROSITE" id="PS01169">
    <property type="entry name" value="RIBOSOMAL_L21"/>
    <property type="match status" value="1"/>
</dbReference>
<gene>
    <name evidence="1" type="primary">rplU</name>
    <name type="ordered locus">Suden_1416</name>
</gene>
<organism>
    <name type="scientific">Sulfurimonas denitrificans (strain ATCC 33889 / DSM 1251)</name>
    <name type="common">Thiomicrospira denitrificans (strain ATCC 33889 / DSM 1251)</name>
    <dbReference type="NCBI Taxonomy" id="326298"/>
    <lineage>
        <taxon>Bacteria</taxon>
        <taxon>Pseudomonadati</taxon>
        <taxon>Campylobacterota</taxon>
        <taxon>Epsilonproteobacteria</taxon>
        <taxon>Campylobacterales</taxon>
        <taxon>Sulfurimonadaceae</taxon>
        <taxon>Sulfurimonas</taxon>
    </lineage>
</organism>
<protein>
    <recommendedName>
        <fullName evidence="1">Large ribosomal subunit protein bL21</fullName>
    </recommendedName>
    <alternativeName>
        <fullName evidence="2">50S ribosomal protein L21</fullName>
    </alternativeName>
</protein>
<reference key="1">
    <citation type="journal article" date="2008" name="Appl. Environ. Microbiol.">
        <title>Genome of the epsilonproteobacterial chemolithoautotroph Sulfurimonas denitrificans.</title>
        <authorList>
            <person name="Sievert S.M."/>
            <person name="Scott K.M."/>
            <person name="Klotz M.G."/>
            <person name="Chain P.S.G."/>
            <person name="Hauser L.J."/>
            <person name="Hemp J."/>
            <person name="Huegler M."/>
            <person name="Land M."/>
            <person name="Lapidus A."/>
            <person name="Larimer F.W."/>
            <person name="Lucas S."/>
            <person name="Malfatti S.A."/>
            <person name="Meyer F."/>
            <person name="Paulsen I.T."/>
            <person name="Ren Q."/>
            <person name="Simon J."/>
            <person name="Bailey K."/>
            <person name="Diaz E."/>
            <person name="Fitzpatrick K.A."/>
            <person name="Glover B."/>
            <person name="Gwatney N."/>
            <person name="Korajkic A."/>
            <person name="Long A."/>
            <person name="Mobberley J.M."/>
            <person name="Pantry S.N."/>
            <person name="Pazder G."/>
            <person name="Peterson S."/>
            <person name="Quintanilla J.D."/>
            <person name="Sprinkle R."/>
            <person name="Stephens J."/>
            <person name="Thomas P."/>
            <person name="Vaughn R."/>
            <person name="Weber M.J."/>
            <person name="Wooten L.L."/>
        </authorList>
    </citation>
    <scope>NUCLEOTIDE SEQUENCE [LARGE SCALE GENOMIC DNA]</scope>
    <source>
        <strain>ATCC 33889 / DSM 1251</strain>
    </source>
</reference>
<evidence type="ECO:0000255" key="1">
    <source>
        <dbReference type="HAMAP-Rule" id="MF_01363"/>
    </source>
</evidence>
<evidence type="ECO:0000305" key="2"/>
<feature type="chain" id="PRO_0000270741" description="Large ribosomal subunit protein bL21">
    <location>
        <begin position="1"/>
        <end position="102"/>
    </location>
</feature>
<comment type="function">
    <text evidence="1">This protein binds to 23S rRNA in the presence of protein L20.</text>
</comment>
<comment type="subunit">
    <text evidence="1">Part of the 50S ribosomal subunit. Contacts protein L20.</text>
</comment>
<comment type="similarity">
    <text evidence="1">Belongs to the bacterial ribosomal protein bL21 family.</text>
</comment>
<proteinExistence type="inferred from homology"/>
<keyword id="KW-1185">Reference proteome</keyword>
<keyword id="KW-0687">Ribonucleoprotein</keyword>
<keyword id="KW-0689">Ribosomal protein</keyword>
<keyword id="KW-0694">RNA-binding</keyword>
<keyword id="KW-0699">rRNA-binding</keyword>
<name>RL21_SULDN</name>